<sequence>MGLYRIRVSTGASLYAGSNNQVQLWLVGQHGEAALGKRLWPARGKETELKVEVPEYLGPLLFVKLRKRHLLKDDAWFCNWISVQGPGAGDEVRFPCYRWVEGNGVLSLPEGTGRTVGEDPQGLFQKHREEELEERRKLYRWGNWKDGLILNMAGAKLYDLPVDERFLEDKRVDFEVSLAKGLADLAIKDSLNVLTCWKDLDDFNRIFWCGQSKLAERVRDSWKEDALFGYQFLNGANPVVLRRSAHLPARLVFPPGMEELQAQLEKELEGGTLFEADFSLLDGIKANVILCSQQHLAAPLVMLKLQPDGKLLPMVIQLQLPRTGSPPPPLFLPTDPPMAWLLAKCWVRSSDFQLHELQSHLLRGHLMAEVIVVATMRCLPSIHPIFKLIIPHLRYTLEINVRARTGLVSDMGIFDQIMSTGGGGHVQLLKQAGAFLTYSSFCPPDDLADRGLLGVKSSFYAQDALRLWEIIYRYVEGIVSLHYKTDVAVKDDPELQTWCREITEIGLQGAQDRGFPVSLQARDQVCHFVTMCIFTCTGQHASVHLGQLDWYSWVPNAPCTMRLPPPTTKDATLETVMATLPNFHQASLQMSITWQLGRRQPVMVAVGQHEEEYFSGPEPKAVLKKFREELAALDKEIEIRNAKLDMPYEYLRPSVVENSVAI</sequence>
<accession>P16050</accession>
<accession>A8K2P4</accession>
<accession>B7ZA11</accession>
<accession>Q8N6R7</accession>
<accession>Q99657</accession>
<gene>
    <name evidence="32" type="primary">ALOX15</name>
    <name type="synonym">LOG15</name>
</gene>
<evidence type="ECO:0000250" key="1"/>
<evidence type="ECO:0000250" key="2">
    <source>
        <dbReference type="UniProtKB" id="P12530"/>
    </source>
</evidence>
<evidence type="ECO:0000250" key="3">
    <source>
        <dbReference type="UniProtKB" id="P16469"/>
    </source>
</evidence>
<evidence type="ECO:0000250" key="4">
    <source>
        <dbReference type="UniProtKB" id="P39654"/>
    </source>
</evidence>
<evidence type="ECO:0000250" key="5">
    <source>
        <dbReference type="UniProtKB" id="Q02759"/>
    </source>
</evidence>
<evidence type="ECO:0000255" key="6">
    <source>
        <dbReference type="PROSITE-ProRule" id="PRU00152"/>
    </source>
</evidence>
<evidence type="ECO:0000255" key="7">
    <source>
        <dbReference type="PROSITE-ProRule" id="PRU00726"/>
    </source>
</evidence>
<evidence type="ECO:0000269" key="8">
    <source>
    </source>
</evidence>
<evidence type="ECO:0000269" key="9">
    <source>
    </source>
</evidence>
<evidence type="ECO:0000269" key="10">
    <source>
    </source>
</evidence>
<evidence type="ECO:0000269" key="11">
    <source>
    </source>
</evidence>
<evidence type="ECO:0000269" key="12">
    <source>
    </source>
</evidence>
<evidence type="ECO:0000269" key="13">
    <source>
    </source>
</evidence>
<evidence type="ECO:0000269" key="14">
    <source>
    </source>
</evidence>
<evidence type="ECO:0000269" key="15">
    <source>
    </source>
</evidence>
<evidence type="ECO:0000269" key="16">
    <source>
    </source>
</evidence>
<evidence type="ECO:0000269" key="17">
    <source>
    </source>
</evidence>
<evidence type="ECO:0000269" key="18">
    <source>
    </source>
</evidence>
<evidence type="ECO:0000269" key="19">
    <source>
    </source>
</evidence>
<evidence type="ECO:0000269" key="20">
    <source>
    </source>
</evidence>
<evidence type="ECO:0000269" key="21">
    <source>
    </source>
</evidence>
<evidence type="ECO:0000269" key="22">
    <source>
    </source>
</evidence>
<evidence type="ECO:0000269" key="23">
    <source ref="4"/>
</evidence>
<evidence type="ECO:0000303" key="24">
    <source>
    </source>
</evidence>
<evidence type="ECO:0000303" key="25">
    <source>
    </source>
</evidence>
<evidence type="ECO:0000305" key="26"/>
<evidence type="ECO:0000305" key="27">
    <source>
    </source>
</evidence>
<evidence type="ECO:0000305" key="28">
    <source>
    </source>
</evidence>
<evidence type="ECO:0000305" key="29">
    <source>
    </source>
</evidence>
<evidence type="ECO:0000305" key="30">
    <source>
    </source>
</evidence>
<evidence type="ECO:0000305" key="31">
    <source>
    </source>
</evidence>
<evidence type="ECO:0000312" key="32">
    <source>
        <dbReference type="HGNC" id="HGNC:433"/>
    </source>
</evidence>
<comment type="function">
    <text evidence="4 5 10 13 15 17 18 19 21">Non-heme iron-containing dioxygenase that catalyzes the stereo-specific peroxidation of free and esterified polyunsaturated fatty acids generating a spectrum of bioactive lipid mediators (PubMed:17052953, PubMed:1944593, PubMed:24282679, PubMed:25293588, PubMed:32404334, PubMed:8334154). It inserts peroxyl groups at C12 or C15 of arachidonate ((5Z,8Z,11Z,14Z)-eicosatetraenoate) producing both 12-hydroperoxyeicosatetraenoate/12-HPETE and 15-hydroperoxyeicosatetraenoate/15-HPETE (PubMed:17052953, PubMed:1944593, PubMed:24282679, PubMed:8334154). It may then act on 12-HPETE to produce hepoxilins, which may show pro-inflammatory properties (By similarity). Can also peroxidize linoleate ((9Z,12Z)-octadecadienoate) to 13-hydroperoxyoctadecadienoate/13-HPODE (PubMed:8334154). May participate in the sequential oxidations of DHA ((4Z,7Z,10Z,13Z,16Z,19Z)-docosahexaenoate) to generate specialized pro-resolving mediators (SPMs)like resolvin D5 ((7S,17S)-diHPDHA) and (7S,14S)-diHPDHA, that actively down-regulate the immune response and have anti-aggregation properties with platelets (PubMed:32404334). Can convert epoxy fatty acids to hydroperoxy-epoxides derivatives followed by an intramolecular nucleophilic substitution leading to the formation of monocyclic endoperoxides (PubMed:25293588). Plays an important role during the maintenance of self-tolerance by peroxidizing membrane-bound phosphatidylethanolamine which can then signal the sorting process for clearance of apoptotic cells during inflammation and prevent an autoimmune response. In addition to its role in the immune and inflammatory responses, this enzyme may play a role in epithelial wound healing in the cornea through production of lipoxin A4 (LXA(4)) and docosahexaenoic acid-derived neuroprotectin D1 (NPD1; 10R,17S-HDHA), both lipid autacoids exhibit anti-inflammatory and neuroprotective properties. Furthermore, it may regulate actin polymerization which is crucial for several biological processes such as the phagocytosis of apoptotic cells. It is also implicated in the generation of endogenous ligands for peroxisome proliferator activated receptor (PPAR-gamma), hence modulating macrophage development and function. It may also exert a negative effect on skeletal development by regulating bone mass through this pathway. As well as participates in ER stress and downstream inflammation in adipocytes, pancreatic islets, and liver (By similarity). Finally, it is also involved in the cellular response to IL13/interleukin-13 (PubMed:21831839).</text>
</comment>
<comment type="catalytic activity">
    <reaction evidence="13">
        <text>(5Z,8Z,11Z,14Z)-eicosatetraenoate + O2 = (12S)-hydroperoxy-(5Z,8Z,10E,14Z)-eicosatetraenoate</text>
        <dbReference type="Rhea" id="RHEA:10428"/>
        <dbReference type="ChEBI" id="CHEBI:15379"/>
        <dbReference type="ChEBI" id="CHEBI:32395"/>
        <dbReference type="ChEBI" id="CHEBI:57444"/>
        <dbReference type="EC" id="1.13.11.31"/>
    </reaction>
    <physiologicalReaction direction="left-to-right" evidence="27">
        <dbReference type="Rhea" id="RHEA:10429"/>
    </physiologicalReaction>
</comment>
<comment type="catalytic activity">
    <reaction evidence="10 13 17 21">
        <text>(5Z,8Z,11Z,14Z)-eicosatetraenoate + O2 = (15S)-hydroperoxy-(5Z,8Z,11Z,13E)-eicosatetraenoate</text>
        <dbReference type="Rhea" id="RHEA:16869"/>
        <dbReference type="ChEBI" id="CHEBI:15379"/>
        <dbReference type="ChEBI" id="CHEBI:32395"/>
        <dbReference type="ChEBI" id="CHEBI:57446"/>
        <dbReference type="EC" id="1.13.11.33"/>
    </reaction>
    <physiologicalReaction direction="left-to-right" evidence="31">
        <dbReference type="Rhea" id="RHEA:16870"/>
    </physiologicalReaction>
</comment>
<comment type="catalytic activity">
    <reaction evidence="21">
        <text>(9Z,12Z)-octadecadienoate + O2 = (13S)-hydroperoxy-(9Z,11E)-octadecadienoate</text>
        <dbReference type="Rhea" id="RHEA:22780"/>
        <dbReference type="ChEBI" id="CHEBI:15379"/>
        <dbReference type="ChEBI" id="CHEBI:30245"/>
        <dbReference type="ChEBI" id="CHEBI:57466"/>
        <dbReference type="EC" id="1.13.11.12"/>
    </reaction>
    <physiologicalReaction direction="left-to-right" evidence="31">
        <dbReference type="Rhea" id="RHEA:22781"/>
    </physiologicalReaction>
</comment>
<comment type="catalytic activity">
    <reaction evidence="21">
        <text>(5Z,8Z,11Z,14Z)-eicosatetraenoate + 2 O2 = (14R,15S)-dihydroperoxy-(5Z,8Z,10E,12E)-eicosatetraenoate</text>
        <dbReference type="Rhea" id="RHEA:50928"/>
        <dbReference type="ChEBI" id="CHEBI:15379"/>
        <dbReference type="ChEBI" id="CHEBI:32395"/>
        <dbReference type="ChEBI" id="CHEBI:133900"/>
    </reaction>
    <physiologicalReaction direction="left-to-right" evidence="31">
        <dbReference type="Rhea" id="RHEA:50929"/>
    </physiologicalReaction>
</comment>
<comment type="catalytic activity">
    <reaction evidence="21">
        <text>(5Z,8Z,11Z,14Z)-eicosatetraenoate + 2 O2 = (8S,15S)-dihydroperoxy-(5Z,9E,11Z,13E)-eicosatetraenoate</text>
        <dbReference type="Rhea" id="RHEA:50924"/>
        <dbReference type="ChEBI" id="CHEBI:15379"/>
        <dbReference type="ChEBI" id="CHEBI:32395"/>
        <dbReference type="ChEBI" id="CHEBI:133899"/>
    </reaction>
    <physiologicalReaction direction="left-to-right" evidence="31">
        <dbReference type="Rhea" id="RHEA:50925"/>
    </physiologicalReaction>
</comment>
<comment type="catalytic activity">
    <reaction evidence="18">
        <text>(14S,15R)-epoxy-(5Z,8Z,11Z)-eicosatrienoate + O2 = (8S)-hydroperoxy-(14S,15R)-epoxy-(5Z,9E,11Z)-eicosatrienoate</text>
        <dbReference type="Rhea" id="RHEA:50288"/>
        <dbReference type="ChEBI" id="CHEBI:15379"/>
        <dbReference type="ChEBI" id="CHEBI:131964"/>
        <dbReference type="ChEBI" id="CHEBI:132068"/>
    </reaction>
    <physiologicalReaction direction="left-to-right" evidence="29">
        <dbReference type="Rhea" id="RHEA:50289"/>
    </physiologicalReaction>
</comment>
<comment type="catalytic activity">
    <reaction evidence="18">
        <text>(14S,15R)-epoxy-(5Z,8Z,11Z)-eicosatrienoate + O2 = (12S)-hydroperoxy-(14S,15R)-epoxy-(5Z,8Z,10E)-eicosatrienoate</text>
        <dbReference type="Rhea" id="RHEA:50284"/>
        <dbReference type="ChEBI" id="CHEBI:15379"/>
        <dbReference type="ChEBI" id="CHEBI:131964"/>
        <dbReference type="ChEBI" id="CHEBI:132065"/>
    </reaction>
    <physiologicalReaction direction="left-to-right" evidence="29">
        <dbReference type="Rhea" id="RHEA:50285"/>
    </physiologicalReaction>
</comment>
<comment type="catalytic activity">
    <reaction evidence="18">
        <text>(14R,15S)-epoxy-(5Z,8Z,11Z)-eicosatrienoate + O2 = (5S)-hydroperoxy-(14R,15S)-epoxy-(6E,8Z,11Z)-eicosatrienoate</text>
        <dbReference type="Rhea" id="RHEA:50280"/>
        <dbReference type="ChEBI" id="CHEBI:15379"/>
        <dbReference type="ChEBI" id="CHEBI:131965"/>
        <dbReference type="ChEBI" id="CHEBI:132067"/>
    </reaction>
    <physiologicalReaction direction="left-to-right" evidence="29">
        <dbReference type="Rhea" id="RHEA:50281"/>
    </physiologicalReaction>
</comment>
<comment type="catalytic activity">
    <reaction evidence="18">
        <text>(14R,15S)-epoxy-(5Z,8Z,11Z)-eicosatrienoate + O2 = (12S)-hydroperoxy-(14R,15S)-epoxy-(5Z,8Z,10E)-eicosatrienoate</text>
        <dbReference type="Rhea" id="RHEA:50276"/>
        <dbReference type="ChEBI" id="CHEBI:15379"/>
        <dbReference type="ChEBI" id="CHEBI:131965"/>
        <dbReference type="ChEBI" id="CHEBI:132063"/>
    </reaction>
    <physiologicalReaction direction="left-to-right" evidence="29">
        <dbReference type="Rhea" id="RHEA:50277"/>
    </physiologicalReaction>
</comment>
<comment type="catalytic activity">
    <reaction evidence="16">
        <text>(15R)-hydroperoxy-(5Z,8Z,11Z,13E)-eicosatetraenoate = 15-oxo-(5Z,8Z,11Z,13E)-eicosatetraenoate + H2O</text>
        <dbReference type="Rhea" id="RHEA:50152"/>
        <dbReference type="ChEBI" id="CHEBI:15377"/>
        <dbReference type="ChEBI" id="CHEBI:57410"/>
        <dbReference type="ChEBI" id="CHEBI:82626"/>
    </reaction>
    <physiologicalReaction direction="left-to-right" evidence="28">
        <dbReference type="Rhea" id="RHEA:50153"/>
    </physiologicalReaction>
</comment>
<comment type="catalytic activity">
    <reaction evidence="16">
        <text>(15S)-hydroperoxy-(5Z,8Z,11Z,13E)-eicosatetraenoate = (14S,15S)-epoxy-(5Z,8Z,10E,12E)-eicosatetraenoate + H2O</text>
        <dbReference type="Rhea" id="RHEA:50140"/>
        <dbReference type="ChEBI" id="CHEBI:15377"/>
        <dbReference type="ChEBI" id="CHEBI:57446"/>
        <dbReference type="ChEBI" id="CHEBI:132070"/>
    </reaction>
    <physiologicalReaction direction="left-to-right" evidence="28">
        <dbReference type="Rhea" id="RHEA:50141"/>
    </physiologicalReaction>
</comment>
<comment type="catalytic activity">
    <reaction evidence="5">
        <text>(12S)-hydroperoxy-(5Z,8Z,10E,14Z)-eicosatetraenoate = (8S)-hydroxy-(11S,12S)-epoxy-(5Z,9E,14Z)-eicosatrienoate</text>
        <dbReference type="Rhea" id="RHEA:50216"/>
        <dbReference type="ChEBI" id="CHEBI:57444"/>
        <dbReference type="ChEBI" id="CHEBI:132129"/>
    </reaction>
    <physiologicalReaction direction="left-to-right" evidence="5">
        <dbReference type="Rhea" id="RHEA:50217"/>
    </physiologicalReaction>
</comment>
<comment type="catalytic activity">
    <reaction evidence="19">
        <text>(4Z,7Z,10Z,13Z,16Z,19Z)-docosahexaenoate + O2 = (14S)-hydroperoxy-(4Z,7Z,10Z,12E,16Z,19Z)-docosahexaenoate</text>
        <dbReference type="Rhea" id="RHEA:41332"/>
        <dbReference type="ChEBI" id="CHEBI:15379"/>
        <dbReference type="ChEBI" id="CHEBI:77016"/>
        <dbReference type="ChEBI" id="CHEBI:78048"/>
    </reaction>
    <physiologicalReaction direction="left-to-right" evidence="30">
        <dbReference type="Rhea" id="RHEA:41333"/>
    </physiologicalReaction>
</comment>
<comment type="catalytic activity">
    <reaction evidence="19">
        <text>(4Z,7Z,10Z,13Z,16Z,19Z)-docosahexaenoate + O2 = (17S)-hydroperoxy-(4Z,7Z,10Z,13Z,15E,19Z)-docosahexaenoate</text>
        <dbReference type="Rhea" id="RHEA:50840"/>
        <dbReference type="ChEBI" id="CHEBI:15379"/>
        <dbReference type="ChEBI" id="CHEBI:77016"/>
        <dbReference type="ChEBI" id="CHEBI:133795"/>
    </reaction>
    <physiologicalReaction direction="left-to-right" evidence="30">
        <dbReference type="Rhea" id="RHEA:50841"/>
    </physiologicalReaction>
</comment>
<comment type="catalytic activity">
    <reaction evidence="19">
        <text>(7S)-hydroperoxy-(4Z,8E,10Z,13Z,16Z,19Z)-docosahexaenoate + O2 = (7S,14S)-dihydroperoxy-(4Z,8E,10Z,12E,16Z,19Z)-docosahexaenoate</text>
        <dbReference type="Rhea" id="RHEA:64724"/>
        <dbReference type="ChEBI" id="CHEBI:15379"/>
        <dbReference type="ChEBI" id="CHEBI:156049"/>
        <dbReference type="ChEBI" id="CHEBI:156082"/>
    </reaction>
    <physiologicalReaction direction="left-to-right" evidence="30">
        <dbReference type="Rhea" id="RHEA:64725"/>
    </physiologicalReaction>
</comment>
<comment type="catalytic activity">
    <reaction evidence="19">
        <text>(7S)-hydroperoxy-(4Z,8E,10Z,13Z,16Z,19Z)-docosahexaenoate + O2 = (7S,17S)-dihydroperoxy-(4Z,8E,10Z,13Z,15E,19Z)-docosahexaenoate</text>
        <dbReference type="Rhea" id="RHEA:64728"/>
        <dbReference type="ChEBI" id="CHEBI:15379"/>
        <dbReference type="ChEBI" id="CHEBI:140349"/>
        <dbReference type="ChEBI" id="CHEBI:156049"/>
    </reaction>
    <physiologicalReaction direction="left-to-right" evidence="30">
        <dbReference type="Rhea" id="RHEA:64729"/>
    </physiologicalReaction>
</comment>
<comment type="catalytic activity">
    <reaction evidence="19">
        <text>(4Z,7Z,10Z,13Z,16Z,19Z)-docosahexaenoate + O2 = (11S)-hydroperoxy-(4Z,7Z,9E,13Z,16Z,19Z)-docosahexaenoate</text>
        <dbReference type="Rhea" id="RHEA:64732"/>
        <dbReference type="ChEBI" id="CHEBI:15379"/>
        <dbReference type="ChEBI" id="CHEBI:77016"/>
        <dbReference type="ChEBI" id="CHEBI:156131"/>
    </reaction>
    <physiologicalReaction direction="left-to-right" evidence="30">
        <dbReference type="Rhea" id="RHEA:64733"/>
    </physiologicalReaction>
</comment>
<comment type="catalytic activity">
    <reaction evidence="3">
        <text>(7Z,10Z,13Z,16Z,19Z)-docosapentaenoate + O2 = 14-hydroperoxy-(7Z,10Z,12E,16Z,19Z)-docosapentaenoate</text>
        <dbReference type="Rhea" id="RHEA:50836"/>
        <dbReference type="ChEBI" id="CHEBI:15379"/>
        <dbReference type="ChEBI" id="CHEBI:77224"/>
        <dbReference type="ChEBI" id="CHEBI:133798"/>
    </reaction>
    <physiologicalReaction direction="left-to-right" evidence="3">
        <dbReference type="Rhea" id="RHEA:50837"/>
    </physiologicalReaction>
</comment>
<comment type="catalytic activity">
    <reaction evidence="3">
        <text>(4Z,7Z,10Z,13Z,16Z)-docosapentaenoate + O2 = 14-hydroperoxy-(4Z,7Z,10Z,12E,16Z)-docosapentaenoate</text>
        <dbReference type="Rhea" id="RHEA:50824"/>
        <dbReference type="ChEBI" id="CHEBI:15379"/>
        <dbReference type="ChEBI" id="CHEBI:77226"/>
        <dbReference type="ChEBI" id="CHEBI:133799"/>
    </reaction>
    <physiologicalReaction direction="left-to-right" evidence="3">
        <dbReference type="Rhea" id="RHEA:50825"/>
    </physiologicalReaction>
</comment>
<comment type="catalytic activity">
    <reaction evidence="3">
        <text>N-(5Z,8Z,11Z,14Z)-eicosatetraenoyl-taurine + O2 = N-(12S)-hydroperoxy-(5Z,8Z,10E,14Z)-eicosatetraenoyl-taurine</text>
        <dbReference type="Rhea" id="RHEA:50160"/>
        <dbReference type="ChEBI" id="CHEBI:15379"/>
        <dbReference type="ChEBI" id="CHEBI:132060"/>
        <dbReference type="ChEBI" id="CHEBI:132061"/>
    </reaction>
    <physiologicalReaction direction="left-to-right" evidence="3">
        <dbReference type="Rhea" id="RHEA:50161"/>
    </physiologicalReaction>
</comment>
<comment type="catalytic activity">
    <reaction evidence="3">
        <text>N-(5Z,8Z,11Z,14Z)-eicosatetraenoyl-gamma-aminobutanoate + O2 = N-(12S)-hydroperoxy-(5Z,8Z,10E,14Z)-eicosatetraenoyl-gamma-aminobutanoate</text>
        <dbReference type="Rhea" id="RHEA:50176"/>
        <dbReference type="ChEBI" id="CHEBI:15379"/>
        <dbReference type="ChEBI" id="CHEBI:132072"/>
        <dbReference type="ChEBI" id="CHEBI:132075"/>
    </reaction>
    <physiologicalReaction direction="left-to-right" evidence="3">
        <dbReference type="Rhea" id="RHEA:50177"/>
    </physiologicalReaction>
</comment>
<comment type="catalytic activity">
    <reaction evidence="3">
        <text>N-(5Z,8Z,11Z,14Z)-eicosatetraenoyl-glycine + O2 = N-(12S)-hydroperoxy-(5Z,8Z,10E,14Z)-eicosatetraenoyl-glycine</text>
        <dbReference type="Rhea" id="RHEA:50168"/>
        <dbReference type="ChEBI" id="CHEBI:15379"/>
        <dbReference type="ChEBI" id="CHEBI:59002"/>
        <dbReference type="ChEBI" id="CHEBI:132073"/>
    </reaction>
    <physiologicalReaction direction="left-to-right" evidence="3">
        <dbReference type="Rhea" id="RHEA:50169"/>
    </physiologicalReaction>
</comment>
<comment type="catalytic activity">
    <reaction evidence="3">
        <text>N-(5Z,8Z,11Z,14Z)-eicosatetraenoyl-L-alanine + O2 = N-(12S)-hydroperoxy-(5Z,8Z,10E,14Z)-eicosatetraenoyl-alanine</text>
        <dbReference type="Rhea" id="RHEA:50172"/>
        <dbReference type="ChEBI" id="CHEBI:15379"/>
        <dbReference type="ChEBI" id="CHEBI:132071"/>
        <dbReference type="ChEBI" id="CHEBI:132074"/>
    </reaction>
    <physiologicalReaction direction="left-to-right" evidence="3">
        <dbReference type="Rhea" id="RHEA:50173"/>
    </physiologicalReaction>
</comment>
<comment type="catalytic activity">
    <reaction evidence="2">
        <text>N-(5Z,8Z,11Z,14Z)-eicosatetraenoyl-taurine + O2 = N-(15S)-hydroperoxy-(5Z,8Z,11Z,13E)-eicosatetraenoyl-taurine</text>
        <dbReference type="Rhea" id="RHEA:50156"/>
        <dbReference type="ChEBI" id="CHEBI:15379"/>
        <dbReference type="ChEBI" id="CHEBI:132060"/>
        <dbReference type="ChEBI" id="CHEBI:132062"/>
    </reaction>
    <physiologicalReaction direction="left-to-right" evidence="2">
        <dbReference type="Rhea" id="RHEA:50157"/>
    </physiologicalReaction>
</comment>
<comment type="catalytic activity">
    <reaction evidence="2">
        <text>N-(5Z,8Z,11Z,14Z)-eicosatetraenoyl-gamma-aminobutanoate + O2 = N-(15S)-hydroperoxy-(5Z,8Z,11Z,13E)-eicosatetraenoyl-gamma-aminobutanoate</text>
        <dbReference type="Rhea" id="RHEA:50180"/>
        <dbReference type="ChEBI" id="CHEBI:15379"/>
        <dbReference type="ChEBI" id="CHEBI:132072"/>
        <dbReference type="ChEBI" id="CHEBI:132078"/>
    </reaction>
    <physiologicalReaction direction="left-to-right" evidence="2">
        <dbReference type="Rhea" id="RHEA:50181"/>
    </physiologicalReaction>
</comment>
<comment type="catalytic activity">
    <reaction evidence="2">
        <text>N-(5Z,8Z,11Z,14Z)-eicosatetraenoyl-glycine + O2 = N-(15S)-hydroperoxy-(5Z,8Z,11Z,13E)-eicosatetraenoyl-glycine</text>
        <dbReference type="Rhea" id="RHEA:50188"/>
        <dbReference type="ChEBI" id="CHEBI:15379"/>
        <dbReference type="ChEBI" id="CHEBI:59002"/>
        <dbReference type="ChEBI" id="CHEBI:132076"/>
    </reaction>
    <physiologicalReaction direction="left-to-right" evidence="2">
        <dbReference type="Rhea" id="RHEA:50189"/>
    </physiologicalReaction>
</comment>
<comment type="catalytic activity">
    <reaction evidence="2">
        <text>N-(5Z,8Z,11Z,14Z)-eicosatetraenoyl-L-alanine + O2 = N-(15S)-hydroperoxy-(5Z,8Z,11Z,13E)-eicosatetraenoyl-alanine</text>
        <dbReference type="Rhea" id="RHEA:50184"/>
        <dbReference type="ChEBI" id="CHEBI:15379"/>
        <dbReference type="ChEBI" id="CHEBI:132071"/>
        <dbReference type="ChEBI" id="CHEBI:132077"/>
    </reaction>
    <physiologicalReaction direction="left-to-right" evidence="2">
        <dbReference type="Rhea" id="RHEA:50185"/>
    </physiologicalReaction>
</comment>
<comment type="cofactor">
    <cofactor evidence="3 7">
        <name>Fe cation</name>
        <dbReference type="ChEBI" id="CHEBI:24875"/>
    </cofactor>
    <text evidence="3 7">Binds 1 Fe cation per subunit.</text>
</comment>
<comment type="activity regulation">
    <text evidence="10 21">Activity is increased by binding phosphatidylinositol phosphates, especially phosphatidylinositol 3,4-bisphosphate and phosphatidylinositol 4,5-bisphosphate (PubMed:17052953). Inactivated at 37 degrees Celsius by (13S)-hydroperoxy-(9Z,11E)-octadecadienoate (PubMed:8334154).</text>
</comment>
<comment type="biophysicochemical properties">
    <kinetics>
        <KM evidence="21">3 uM for (9Z,12Z)-octadecadienoate</KM>
        <KM evidence="21">12 uM for (5Z,8Z,11Z,14Z)-eicosatetraenoate</KM>
        <KM evidence="17">3.8 uM for (9Z,12Z)-octadecadienoate</KM>
        <Vmax evidence="21">10.6 umol/min/mg enzyme toward (9Z,12Z)-octadecadienoate</Vmax>
        <Vmax evidence="21">5.6 umol/min/mg enzyme toward (5Z,8Z,11Z,14Z)-eicosatetraenoate</Vmax>
        <text evidence="17">kcat is 14.4 sec(-1) with (9Z,12Z)-octadecadienoate as substrate.</text>
    </kinetics>
    <phDependence>
        <text evidence="21">Optimum pH is 7 with (9Z,12Z)-octadecadienoate as substrate.</text>
    </phDependence>
</comment>
<comment type="pathway">
    <text evidence="13">Lipid metabolism; hydroperoxy eicosatetraenoic acid biosynthesis.</text>
</comment>
<comment type="subunit">
    <text evidence="15">Interacts with PEBP1; in response to IL13/interleukin-13, prevents the interaction of PEBP1 with RAF1 to activate the ERK signaling cascade.</text>
</comment>
<comment type="interaction">
    <interactant intactId="EBI-14035397">
        <id>P16050</id>
    </interactant>
    <interactant intactId="EBI-716384">
        <id>P30086</id>
        <label>PEBP1</label>
    </interactant>
    <organismsDiffer>false</organismsDiffer>
    <experiments>3</experiments>
</comment>
<comment type="interaction">
    <interactant intactId="EBI-14035397">
        <id>P16050</id>
    </interactant>
    <interactant intactId="EBI-10974729">
        <id>Q9BSF4</id>
        <label>TIMM29</label>
    </interactant>
    <organismsDiffer>false</organismsDiffer>
    <experiments>2</experiments>
</comment>
<comment type="subcellular location">
    <subcellularLocation>
        <location evidence="10 15">Cytoplasm</location>
        <location evidence="10 15">Cytosol</location>
    </subcellularLocation>
    <subcellularLocation>
        <location evidence="15">Cell membrane</location>
        <topology evidence="10">Peripheral membrane protein</topology>
    </subcellularLocation>
    <subcellularLocation>
        <location evidence="14">Lipid droplet</location>
    </subcellularLocation>
    <text evidence="4">Predominantly cytosolic; becomes enriched at membranes upon calcium binding (By similarity). Translocates from the cytosol to the plasma membrane when stimulated by IL13/interleukin-13 and in macrophages binding apoptotic cells (By similarity).</text>
</comment>
<comment type="alternative products">
    <event type="alternative splicing"/>
    <isoform>
        <id>P16050-1</id>
        <name>1</name>
        <sequence type="displayed"/>
    </isoform>
    <isoform>
        <id>P16050-2</id>
        <name>2</name>
        <sequence type="described" ref="VSP_056681"/>
    </isoform>
</comment>
<comment type="tissue specificity">
    <text evidence="15 22">Detected in monocytes and eosinophils (at protein level). Expressed in airway epithelial cells.</text>
</comment>
<comment type="induction">
    <text evidence="12">Up-regulated by UV-irradiation.</text>
</comment>
<comment type="domain">
    <text evidence="1">The PLAT domain can bind calcium ions; this promotes association with membranes.</text>
</comment>
<comment type="disease">
    <text evidence="11">Disease susceptibility may be associated with variants affecting the gene represented in this entry. Met at position 560 may confer interindividual susceptibility to coronary artery disease (CAD) (PubMed:17959182).</text>
</comment>
<comment type="similarity">
    <text evidence="26">Belongs to the lipoxygenase family.</text>
</comment>
<comment type="online information" name="Atlas of Genetics and Cytogenetics in Oncology and Haematology">
    <link uri="https://atlasgeneticsoncology.org/gene/42986/ALOX15"/>
</comment>
<keyword id="KW-0025">Alternative splicing</keyword>
<keyword id="KW-0106">Calcium</keyword>
<keyword id="KW-1003">Cell membrane</keyword>
<keyword id="KW-0963">Cytoplasm</keyword>
<keyword id="KW-0223">Dioxygenase</keyword>
<keyword id="KW-0903">Direct protein sequencing</keyword>
<keyword id="KW-0276">Fatty acid metabolism</keyword>
<keyword id="KW-0408">Iron</keyword>
<keyword id="KW-0551">Lipid droplet</keyword>
<keyword id="KW-0443">Lipid metabolism</keyword>
<keyword id="KW-0446">Lipid-binding</keyword>
<keyword id="KW-0472">Membrane</keyword>
<keyword id="KW-0479">Metal-binding</keyword>
<keyword id="KW-0560">Oxidoreductase</keyword>
<keyword id="KW-1267">Proteomics identification</keyword>
<keyword id="KW-1185">Reference proteome</keyword>
<organism>
    <name type="scientific">Homo sapiens</name>
    <name type="common">Human</name>
    <dbReference type="NCBI Taxonomy" id="9606"/>
    <lineage>
        <taxon>Eukaryota</taxon>
        <taxon>Metazoa</taxon>
        <taxon>Chordata</taxon>
        <taxon>Craniata</taxon>
        <taxon>Vertebrata</taxon>
        <taxon>Euteleostomi</taxon>
        <taxon>Mammalia</taxon>
        <taxon>Eutheria</taxon>
        <taxon>Euarchontoglires</taxon>
        <taxon>Primates</taxon>
        <taxon>Haplorrhini</taxon>
        <taxon>Catarrhini</taxon>
        <taxon>Hominidae</taxon>
        <taxon>Homo</taxon>
    </lineage>
</organism>
<dbReference type="EC" id="1.13.11.31" evidence="13"/>
<dbReference type="EC" id="1.13.11.33" evidence="10 13 17 21"/>
<dbReference type="EC" id="1.13.11.-" evidence="5"/>
<dbReference type="EC" id="1.13.11.12" evidence="21"/>
<dbReference type="EMBL" id="M23892">
    <property type="protein sequence ID" value="AAA36182.1"/>
    <property type="molecule type" value="mRNA"/>
</dbReference>
<dbReference type="EMBL" id="U88317">
    <property type="protein sequence ID" value="AAB49305.1"/>
    <property type="molecule type" value="Genomic_DNA"/>
</dbReference>
<dbReference type="EMBL" id="AK290309">
    <property type="protein sequence ID" value="BAF82998.1"/>
    <property type="molecule type" value="mRNA"/>
</dbReference>
<dbReference type="EMBL" id="AK316126">
    <property type="protein sequence ID" value="BAH14497.1"/>
    <property type="molecule type" value="mRNA"/>
</dbReference>
<dbReference type="EMBL" id="AY505111">
    <property type="protein sequence ID" value="AAR84235.1"/>
    <property type="molecule type" value="Genomic_DNA"/>
</dbReference>
<dbReference type="EMBL" id="AC118754">
    <property type="status" value="NOT_ANNOTATED_CDS"/>
    <property type="molecule type" value="Genomic_DNA"/>
</dbReference>
<dbReference type="EMBL" id="BC029032">
    <property type="protein sequence ID" value="AAH29032.1"/>
    <property type="molecule type" value="mRNA"/>
</dbReference>
<dbReference type="EMBL" id="U63384">
    <property type="protein sequence ID" value="AAC52118.1"/>
    <property type="molecule type" value="Genomic_DNA"/>
</dbReference>
<dbReference type="CCDS" id="CCDS11049.1">
    <molecule id="P16050-1"/>
</dbReference>
<dbReference type="PIR" id="A31349">
    <property type="entry name" value="A31349"/>
</dbReference>
<dbReference type="RefSeq" id="NP_001131.3">
    <molecule id="P16050-1"/>
    <property type="nucleotide sequence ID" value="NM_001140.3"/>
</dbReference>
<dbReference type="SMR" id="P16050"/>
<dbReference type="BioGRID" id="106747">
    <property type="interactions" value="24"/>
</dbReference>
<dbReference type="DIP" id="DIP-60388N"/>
<dbReference type="FunCoup" id="P16050">
    <property type="interactions" value="226"/>
</dbReference>
<dbReference type="IntAct" id="P16050">
    <property type="interactions" value="8"/>
</dbReference>
<dbReference type="STRING" id="9606.ENSP00000293761"/>
<dbReference type="BindingDB" id="P16050"/>
<dbReference type="ChEMBL" id="CHEMBL2903"/>
<dbReference type="DrugBank" id="DB08492">
    <property type="generic name" value="(2E)-3-(2-OCT-1-YN-1-YLPHENYL)ACRYLIC ACID"/>
</dbReference>
<dbReference type="DrugBank" id="DB09061">
    <property type="generic name" value="Cannabidiol"/>
</dbReference>
<dbReference type="DrugBank" id="DB01852">
    <property type="generic name" value="Kaempherol"/>
</dbReference>
<dbReference type="DrugBank" id="DB14371">
    <property type="generic name" value="Mangostin"/>
</dbReference>
<dbReference type="DrugBank" id="DB14009">
    <property type="generic name" value="Medical Cannabis"/>
</dbReference>
<dbReference type="DrugBank" id="DB14011">
    <property type="generic name" value="Nabiximols"/>
</dbReference>
<dbReference type="DrugBank" id="DB02709">
    <property type="generic name" value="Resveratrol"/>
</dbReference>
<dbReference type="DrugCentral" id="P16050"/>
<dbReference type="GuidetoPHARMACOLOGY" id="1388"/>
<dbReference type="SwissLipids" id="SLP:000000667"/>
<dbReference type="iPTMnet" id="P16050"/>
<dbReference type="MetOSite" id="P16050"/>
<dbReference type="PhosphoSitePlus" id="P16050"/>
<dbReference type="BioMuta" id="ALOX15"/>
<dbReference type="DMDM" id="126396"/>
<dbReference type="MassIVE" id="P16050"/>
<dbReference type="PaxDb" id="9606-ENSP00000458832"/>
<dbReference type="PeptideAtlas" id="P16050"/>
<dbReference type="ProteomicsDB" id="53264">
    <molecule id="P16050-1"/>
</dbReference>
<dbReference type="ProteomicsDB" id="7049"/>
<dbReference type="Antibodypedia" id="2761">
    <property type="antibodies" value="361 antibodies from 32 providers"/>
</dbReference>
<dbReference type="DNASU" id="246"/>
<dbReference type="Ensembl" id="ENST00000293761.8">
    <molecule id="P16050-1"/>
    <property type="protein sequence ID" value="ENSP00000293761.3"/>
    <property type="gene ID" value="ENSG00000161905.13"/>
</dbReference>
<dbReference type="Ensembl" id="ENST00000570836.6">
    <molecule id="P16050-1"/>
    <property type="protein sequence ID" value="ENSP00000458832.1"/>
    <property type="gene ID" value="ENSG00000161905.13"/>
</dbReference>
<dbReference type="Ensembl" id="ENST00000574640.1">
    <molecule id="P16050-2"/>
    <property type="protein sequence ID" value="ENSP00000460483.1"/>
    <property type="gene ID" value="ENSG00000161905.13"/>
</dbReference>
<dbReference type="GeneID" id="246"/>
<dbReference type="KEGG" id="hsa:246"/>
<dbReference type="MANE-Select" id="ENST00000293761.8">
    <property type="protein sequence ID" value="ENSP00000293761.3"/>
    <property type="RefSeq nucleotide sequence ID" value="NM_001140.5"/>
    <property type="RefSeq protein sequence ID" value="NP_001131.3"/>
</dbReference>
<dbReference type="UCSC" id="uc002fyh.4">
    <molecule id="P16050-1"/>
    <property type="organism name" value="human"/>
</dbReference>
<dbReference type="AGR" id="HGNC:433"/>
<dbReference type="CTD" id="246"/>
<dbReference type="DisGeNET" id="246"/>
<dbReference type="GeneCards" id="ALOX15"/>
<dbReference type="HGNC" id="HGNC:433">
    <property type="gene designation" value="ALOX15"/>
</dbReference>
<dbReference type="HPA" id="ENSG00000161905">
    <property type="expression patterns" value="Tissue enhanced (adipose tissue, fallopian tube)"/>
</dbReference>
<dbReference type="MIM" id="152392">
    <property type="type" value="gene"/>
</dbReference>
<dbReference type="neXtProt" id="NX_P16050"/>
<dbReference type="OpenTargets" id="ENSG00000161905"/>
<dbReference type="PharmGKB" id="PA48"/>
<dbReference type="VEuPathDB" id="HostDB:ENSG00000161905"/>
<dbReference type="eggNOG" id="ENOG502QQSP">
    <property type="taxonomic scope" value="Eukaryota"/>
</dbReference>
<dbReference type="GeneTree" id="ENSGT00940000162807"/>
<dbReference type="HOGENOM" id="CLU_004282_3_3_1"/>
<dbReference type="InParanoid" id="P16050"/>
<dbReference type="OMA" id="SFCPPED"/>
<dbReference type="OrthoDB" id="407298at2759"/>
<dbReference type="PAN-GO" id="P16050">
    <property type="GO annotations" value="9 GO annotations based on evolutionary models"/>
</dbReference>
<dbReference type="PhylomeDB" id="P16050"/>
<dbReference type="TreeFam" id="TF105320"/>
<dbReference type="BioCyc" id="MetaCyc:HS08621-MONOMER"/>
<dbReference type="BRENDA" id="1.13.11.31">
    <property type="organism ID" value="2681"/>
</dbReference>
<dbReference type="BRENDA" id="1.13.11.33">
    <property type="organism ID" value="2681"/>
</dbReference>
<dbReference type="PathwayCommons" id="P16050"/>
<dbReference type="Reactome" id="R-HSA-2142691">
    <property type="pathway name" value="Synthesis of Leukotrienes (LT) and Eoxins (EX)"/>
</dbReference>
<dbReference type="Reactome" id="R-HSA-2142712">
    <property type="pathway name" value="Synthesis of 12-eicosatetraenoic acid derivatives"/>
</dbReference>
<dbReference type="Reactome" id="R-HSA-2142770">
    <property type="pathway name" value="Synthesis of 15-eicosatetraenoic acid derivatives"/>
</dbReference>
<dbReference type="Reactome" id="R-HSA-6785807">
    <property type="pathway name" value="Interleukin-4 and Interleukin-13 signaling"/>
</dbReference>
<dbReference type="Reactome" id="R-HSA-9018677">
    <property type="pathway name" value="Biosynthesis of DHA-derived SPMs"/>
</dbReference>
<dbReference type="Reactome" id="R-HSA-9018681">
    <property type="pathway name" value="Biosynthesis of protectins"/>
</dbReference>
<dbReference type="Reactome" id="R-HSA-9018896">
    <property type="pathway name" value="Biosynthesis of E-series 18(S)-resolvins"/>
</dbReference>
<dbReference type="Reactome" id="R-HSA-9023661">
    <property type="pathway name" value="Biosynthesis of E-series 18(R)-resolvins"/>
</dbReference>
<dbReference type="Reactome" id="R-HSA-9025106">
    <property type="pathway name" value="Biosynthesis of DPAn-6 SPMs"/>
</dbReference>
<dbReference type="Reactome" id="R-HSA-9026286">
    <property type="pathway name" value="Biosynthesis of DPAn-3-derived protectins and resolvins"/>
</dbReference>
<dbReference type="SABIO-RK" id="P16050"/>
<dbReference type="SignaLink" id="P16050"/>
<dbReference type="SIGNOR" id="P16050"/>
<dbReference type="UniPathway" id="UPA00881"/>
<dbReference type="BioGRID-ORCS" id="246">
    <property type="hits" value="9 hits in 1151 CRISPR screens"/>
</dbReference>
<dbReference type="GeneWiki" id="ALOX15"/>
<dbReference type="GenomeRNAi" id="246"/>
<dbReference type="Pharos" id="P16050">
    <property type="development level" value="Tchem"/>
</dbReference>
<dbReference type="PRO" id="PR:P16050"/>
<dbReference type="Proteomes" id="UP000005640">
    <property type="component" value="Chromosome 17"/>
</dbReference>
<dbReference type="RNAct" id="P16050">
    <property type="molecule type" value="protein"/>
</dbReference>
<dbReference type="Bgee" id="ENSG00000161905">
    <property type="expression patterns" value="Expressed in olfactory segment of nasal mucosa and 109 other cell types or tissues"/>
</dbReference>
<dbReference type="GO" id="GO:0009898">
    <property type="term" value="C:cytoplasmic side of plasma membrane"/>
    <property type="evidence" value="ECO:0000314"/>
    <property type="project" value="UniProtKB"/>
</dbReference>
<dbReference type="GO" id="GO:0005829">
    <property type="term" value="C:cytosol"/>
    <property type="evidence" value="ECO:0000314"/>
    <property type="project" value="UniProtKB"/>
</dbReference>
<dbReference type="GO" id="GO:0005811">
    <property type="term" value="C:lipid droplet"/>
    <property type="evidence" value="ECO:0000314"/>
    <property type="project" value="UniProtKB"/>
</dbReference>
<dbReference type="GO" id="GO:0016020">
    <property type="term" value="C:membrane"/>
    <property type="evidence" value="ECO:0000314"/>
    <property type="project" value="UniProtKB"/>
</dbReference>
<dbReference type="GO" id="GO:0005886">
    <property type="term" value="C:plasma membrane"/>
    <property type="evidence" value="ECO:0000250"/>
    <property type="project" value="UniProtKB"/>
</dbReference>
<dbReference type="GO" id="GO:0004052">
    <property type="term" value="F:arachidonate 12(S)-lipoxygenase activity"/>
    <property type="evidence" value="ECO:0000314"/>
    <property type="project" value="UniProtKB"/>
</dbReference>
<dbReference type="GO" id="GO:0050473">
    <property type="term" value="F:arachidonate 15-lipoxygenase activity"/>
    <property type="evidence" value="ECO:0000314"/>
    <property type="project" value="UniProtKB"/>
</dbReference>
<dbReference type="GO" id="GO:0005506">
    <property type="term" value="F:iron ion binding"/>
    <property type="evidence" value="ECO:0000250"/>
    <property type="project" value="UniProtKB"/>
</dbReference>
<dbReference type="GO" id="GO:0016165">
    <property type="term" value="F:linoleate 13S-lipoxygenase activity"/>
    <property type="evidence" value="ECO:0000314"/>
    <property type="project" value="UniProtKB"/>
</dbReference>
<dbReference type="GO" id="GO:0005546">
    <property type="term" value="F:phosphatidylinositol-4,5-bisphosphate binding"/>
    <property type="evidence" value="ECO:0000314"/>
    <property type="project" value="UniProtKB"/>
</dbReference>
<dbReference type="GO" id="GO:0043277">
    <property type="term" value="P:apoptotic cell clearance"/>
    <property type="evidence" value="ECO:0000250"/>
    <property type="project" value="UniProtKB"/>
</dbReference>
<dbReference type="GO" id="GO:0019369">
    <property type="term" value="P:arachidonate metabolic process"/>
    <property type="evidence" value="ECO:0000314"/>
    <property type="project" value="UniProtKB"/>
</dbReference>
<dbReference type="GO" id="GO:0030282">
    <property type="term" value="P:bone mineralization"/>
    <property type="evidence" value="ECO:0000250"/>
    <property type="project" value="UniProtKB"/>
</dbReference>
<dbReference type="GO" id="GO:0071277">
    <property type="term" value="P:cellular response to calcium ion"/>
    <property type="evidence" value="ECO:0000314"/>
    <property type="project" value="UniProtKB"/>
</dbReference>
<dbReference type="GO" id="GO:0035963">
    <property type="term" value="P:cellular response to interleukin-13"/>
    <property type="evidence" value="ECO:0000315"/>
    <property type="project" value="UniProtKB"/>
</dbReference>
<dbReference type="GO" id="GO:0019395">
    <property type="term" value="P:fatty acid oxidation"/>
    <property type="evidence" value="ECO:0000250"/>
    <property type="project" value="UniProtKB"/>
</dbReference>
<dbReference type="GO" id="GO:0051122">
    <property type="term" value="P:hepoxilin biosynthetic process"/>
    <property type="evidence" value="ECO:0000250"/>
    <property type="project" value="UniProtKB"/>
</dbReference>
<dbReference type="GO" id="GO:0006954">
    <property type="term" value="P:inflammatory response"/>
    <property type="evidence" value="ECO:0000304"/>
    <property type="project" value="ProtInc"/>
</dbReference>
<dbReference type="GO" id="GO:0043651">
    <property type="term" value="P:linoleic acid metabolic process"/>
    <property type="evidence" value="ECO:0000314"/>
    <property type="project" value="UniProtKB"/>
</dbReference>
<dbReference type="GO" id="GO:0006629">
    <property type="term" value="P:lipid metabolic process"/>
    <property type="evidence" value="ECO:0000314"/>
    <property type="project" value="UniProtKB"/>
</dbReference>
<dbReference type="GO" id="GO:0034440">
    <property type="term" value="P:lipid oxidation"/>
    <property type="evidence" value="ECO:0000318"/>
    <property type="project" value="GO_Central"/>
</dbReference>
<dbReference type="GO" id="GO:2001303">
    <property type="term" value="P:lipoxin A4 biosynthetic process"/>
    <property type="evidence" value="ECO:0000250"/>
    <property type="project" value="UniProtKB"/>
</dbReference>
<dbReference type="GO" id="GO:0019372">
    <property type="term" value="P:lipoxygenase pathway"/>
    <property type="evidence" value="ECO:0000314"/>
    <property type="project" value="UniProtKB"/>
</dbReference>
<dbReference type="GO" id="GO:0042759">
    <property type="term" value="P:long-chain fatty acid biosynthetic process"/>
    <property type="evidence" value="ECO:0000304"/>
    <property type="project" value="Reactome"/>
</dbReference>
<dbReference type="GO" id="GO:0002820">
    <property type="term" value="P:negative regulation of adaptive immune response"/>
    <property type="evidence" value="ECO:0000250"/>
    <property type="project" value="UniProtKB"/>
</dbReference>
<dbReference type="GO" id="GO:0001503">
    <property type="term" value="P:ossification"/>
    <property type="evidence" value="ECO:0000250"/>
    <property type="project" value="UniProtKB"/>
</dbReference>
<dbReference type="GO" id="GO:0006646">
    <property type="term" value="P:phosphatidylethanolamine biosynthetic process"/>
    <property type="evidence" value="ECO:0000250"/>
    <property type="project" value="UniProtKB"/>
</dbReference>
<dbReference type="GO" id="GO:0030838">
    <property type="term" value="P:positive regulation of actin filament polymerization"/>
    <property type="evidence" value="ECO:0000250"/>
    <property type="project" value="UniProtKB"/>
</dbReference>
<dbReference type="GO" id="GO:0010811">
    <property type="term" value="P:positive regulation of cell-substrate adhesion"/>
    <property type="evidence" value="ECO:0000314"/>
    <property type="project" value="UniProtKB"/>
</dbReference>
<dbReference type="GO" id="GO:0070374">
    <property type="term" value="P:positive regulation of ERK1 and ERK2 cascade"/>
    <property type="evidence" value="ECO:0000315"/>
    <property type="project" value="UniProtKB"/>
</dbReference>
<dbReference type="GO" id="GO:1901074">
    <property type="term" value="P:regulation of engulfment of apoptotic cell"/>
    <property type="evidence" value="ECO:0000250"/>
    <property type="project" value="UniProtKB"/>
</dbReference>
<dbReference type="GO" id="GO:0050727">
    <property type="term" value="P:regulation of inflammatory response"/>
    <property type="evidence" value="ECO:0000314"/>
    <property type="project" value="UniProtKB"/>
</dbReference>
<dbReference type="GO" id="GO:0035358">
    <property type="term" value="P:regulation of peroxisome proliferator activated receptor signaling pathway"/>
    <property type="evidence" value="ECO:0000250"/>
    <property type="project" value="UniProtKB"/>
</dbReference>
<dbReference type="GO" id="GO:0034976">
    <property type="term" value="P:response to endoplasmic reticulum stress"/>
    <property type="evidence" value="ECO:0000250"/>
    <property type="project" value="UniProtKB"/>
</dbReference>
<dbReference type="GO" id="GO:0042060">
    <property type="term" value="P:wound healing"/>
    <property type="evidence" value="ECO:0000250"/>
    <property type="project" value="UniProtKB"/>
</dbReference>
<dbReference type="CDD" id="cd01753">
    <property type="entry name" value="PLAT_LOX"/>
    <property type="match status" value="1"/>
</dbReference>
<dbReference type="DisProt" id="DP02162"/>
<dbReference type="FunFam" id="3.10.450.60:FF:000004">
    <property type="entry name" value="Arachidonate 12-lipoxygenase, 12S-type"/>
    <property type="match status" value="1"/>
</dbReference>
<dbReference type="FunFam" id="1.20.245.10:FF:000001">
    <property type="entry name" value="Arachidonate 5-lipoxygenase a"/>
    <property type="match status" value="1"/>
</dbReference>
<dbReference type="FunFam" id="2.60.60.20:FF:000002">
    <property type="entry name" value="Arachidonate 5-lipoxygenase a"/>
    <property type="match status" value="1"/>
</dbReference>
<dbReference type="Gene3D" id="3.10.450.60">
    <property type="match status" value="1"/>
</dbReference>
<dbReference type="Gene3D" id="1.20.245.10">
    <property type="entry name" value="Lipoxygenase-1, Domain 5"/>
    <property type="match status" value="1"/>
</dbReference>
<dbReference type="Gene3D" id="2.60.60.20">
    <property type="entry name" value="PLAT/LH2 domain"/>
    <property type="match status" value="1"/>
</dbReference>
<dbReference type="InterPro" id="IPR000907">
    <property type="entry name" value="LipOase"/>
</dbReference>
<dbReference type="InterPro" id="IPR013819">
    <property type="entry name" value="LipOase_C"/>
</dbReference>
<dbReference type="InterPro" id="IPR036226">
    <property type="entry name" value="LipOase_C_sf"/>
</dbReference>
<dbReference type="InterPro" id="IPR020834">
    <property type="entry name" value="LipOase_CS"/>
</dbReference>
<dbReference type="InterPro" id="IPR020833">
    <property type="entry name" value="LipOase_Fe_BS"/>
</dbReference>
<dbReference type="InterPro" id="IPR001885">
    <property type="entry name" value="LipOase_mml"/>
</dbReference>
<dbReference type="InterPro" id="IPR001024">
    <property type="entry name" value="PLAT/LH2_dom"/>
</dbReference>
<dbReference type="InterPro" id="IPR036392">
    <property type="entry name" value="PLAT/LH2_dom_sf"/>
</dbReference>
<dbReference type="InterPro" id="IPR042062">
    <property type="entry name" value="PLAT_LOX_verte"/>
</dbReference>
<dbReference type="PANTHER" id="PTHR11771">
    <property type="entry name" value="LIPOXYGENASE"/>
    <property type="match status" value="1"/>
</dbReference>
<dbReference type="Pfam" id="PF00305">
    <property type="entry name" value="Lipoxygenase"/>
    <property type="match status" value="1"/>
</dbReference>
<dbReference type="Pfam" id="PF01477">
    <property type="entry name" value="PLAT"/>
    <property type="match status" value="1"/>
</dbReference>
<dbReference type="PRINTS" id="PR00087">
    <property type="entry name" value="LIPOXYGENASE"/>
</dbReference>
<dbReference type="PRINTS" id="PR00467">
    <property type="entry name" value="MAMLPOXGNASE"/>
</dbReference>
<dbReference type="SMART" id="SM00308">
    <property type="entry name" value="LH2"/>
    <property type="match status" value="1"/>
</dbReference>
<dbReference type="SUPFAM" id="SSF49723">
    <property type="entry name" value="Lipase/lipooxygenase domain (PLAT/LH2 domain)"/>
    <property type="match status" value="1"/>
</dbReference>
<dbReference type="SUPFAM" id="SSF48484">
    <property type="entry name" value="Lipoxigenase"/>
    <property type="match status" value="1"/>
</dbReference>
<dbReference type="PROSITE" id="PS00711">
    <property type="entry name" value="LIPOXYGENASE_1"/>
    <property type="match status" value="1"/>
</dbReference>
<dbReference type="PROSITE" id="PS00081">
    <property type="entry name" value="LIPOXYGENASE_2"/>
    <property type="match status" value="1"/>
</dbReference>
<dbReference type="PROSITE" id="PS51393">
    <property type="entry name" value="LIPOXYGENASE_3"/>
    <property type="match status" value="1"/>
</dbReference>
<dbReference type="PROSITE" id="PS50095">
    <property type="entry name" value="PLAT"/>
    <property type="match status" value="1"/>
</dbReference>
<name>LOX15_HUMAN</name>
<proteinExistence type="evidence at protein level"/>
<reference key="1">
    <citation type="journal article" date="1988" name="Biochem. Biophys. Res. Commun.">
        <title>Molecular cloning and primary structure of human 15-lipoxygenase.</title>
        <authorList>
            <person name="Sigal E."/>
            <person name="Craik C.S."/>
            <person name="Highland E."/>
            <person name="Grunberger D."/>
            <person name="Costello L.L."/>
            <person name="Dixon R.A.F."/>
            <person name="Nadel J.A."/>
        </authorList>
    </citation>
    <scope>NUCLEOTIDE SEQUENCE [MRNA] (ISOFORM 1)</scope>
    <scope>SUBCELLULAR LOCATION</scope>
</reference>
<reference key="2">
    <citation type="journal article" date="1997" name="Biochim. Biophys. Acta">
        <title>Characterization and sequence of an additional 15-lipoxygenase transcript and of the human gene.</title>
        <authorList>
            <person name="Kritzik M.R."/>
            <person name="Ziober A.F."/>
            <person name="Dicharry S."/>
            <person name="Conrad D.J."/>
            <person name="Sigal E."/>
        </authorList>
    </citation>
    <scope>NUCLEOTIDE SEQUENCE [GENOMIC DNA]</scope>
</reference>
<reference key="3">
    <citation type="journal article" date="2004" name="Nat. Genet.">
        <title>Complete sequencing and characterization of 21,243 full-length human cDNAs.</title>
        <authorList>
            <person name="Ota T."/>
            <person name="Suzuki Y."/>
            <person name="Nishikawa T."/>
            <person name="Otsuki T."/>
            <person name="Sugiyama T."/>
            <person name="Irie R."/>
            <person name="Wakamatsu A."/>
            <person name="Hayashi K."/>
            <person name="Sato H."/>
            <person name="Nagai K."/>
            <person name="Kimura K."/>
            <person name="Makita H."/>
            <person name="Sekine M."/>
            <person name="Obayashi M."/>
            <person name="Nishi T."/>
            <person name="Shibahara T."/>
            <person name="Tanaka T."/>
            <person name="Ishii S."/>
            <person name="Yamamoto J."/>
            <person name="Saito K."/>
            <person name="Kawai Y."/>
            <person name="Isono Y."/>
            <person name="Nakamura Y."/>
            <person name="Nagahari K."/>
            <person name="Murakami K."/>
            <person name="Yasuda T."/>
            <person name="Iwayanagi T."/>
            <person name="Wagatsuma M."/>
            <person name="Shiratori A."/>
            <person name="Sudo H."/>
            <person name="Hosoiri T."/>
            <person name="Kaku Y."/>
            <person name="Kodaira H."/>
            <person name="Kondo H."/>
            <person name="Sugawara M."/>
            <person name="Takahashi M."/>
            <person name="Kanda K."/>
            <person name="Yokoi T."/>
            <person name="Furuya T."/>
            <person name="Kikkawa E."/>
            <person name="Omura Y."/>
            <person name="Abe K."/>
            <person name="Kamihara K."/>
            <person name="Katsuta N."/>
            <person name="Sato K."/>
            <person name="Tanikawa M."/>
            <person name="Yamazaki M."/>
            <person name="Ninomiya K."/>
            <person name="Ishibashi T."/>
            <person name="Yamashita H."/>
            <person name="Murakawa K."/>
            <person name="Fujimori K."/>
            <person name="Tanai H."/>
            <person name="Kimata M."/>
            <person name="Watanabe M."/>
            <person name="Hiraoka S."/>
            <person name="Chiba Y."/>
            <person name="Ishida S."/>
            <person name="Ono Y."/>
            <person name="Takiguchi S."/>
            <person name="Watanabe S."/>
            <person name="Yosida M."/>
            <person name="Hotuta T."/>
            <person name="Kusano J."/>
            <person name="Kanehori K."/>
            <person name="Takahashi-Fujii A."/>
            <person name="Hara H."/>
            <person name="Tanase T.-O."/>
            <person name="Nomura Y."/>
            <person name="Togiya S."/>
            <person name="Komai F."/>
            <person name="Hara R."/>
            <person name="Takeuchi K."/>
            <person name="Arita M."/>
            <person name="Imose N."/>
            <person name="Musashino K."/>
            <person name="Yuuki H."/>
            <person name="Oshima A."/>
            <person name="Sasaki N."/>
            <person name="Aotsuka S."/>
            <person name="Yoshikawa Y."/>
            <person name="Matsunawa H."/>
            <person name="Ichihara T."/>
            <person name="Shiohata N."/>
            <person name="Sano S."/>
            <person name="Moriya S."/>
            <person name="Momiyama H."/>
            <person name="Satoh N."/>
            <person name="Takami S."/>
            <person name="Terashima Y."/>
            <person name="Suzuki O."/>
            <person name="Nakagawa S."/>
            <person name="Senoh A."/>
            <person name="Mizoguchi H."/>
            <person name="Goto Y."/>
            <person name="Shimizu F."/>
            <person name="Wakebe H."/>
            <person name="Hishigaki H."/>
            <person name="Watanabe T."/>
            <person name="Sugiyama A."/>
            <person name="Takemoto M."/>
            <person name="Kawakami B."/>
            <person name="Yamazaki M."/>
            <person name="Watanabe K."/>
            <person name="Kumagai A."/>
            <person name="Itakura S."/>
            <person name="Fukuzumi Y."/>
            <person name="Fujimori Y."/>
            <person name="Komiyama M."/>
            <person name="Tashiro H."/>
            <person name="Tanigami A."/>
            <person name="Fujiwara T."/>
            <person name="Ono T."/>
            <person name="Yamada K."/>
            <person name="Fujii Y."/>
            <person name="Ozaki K."/>
            <person name="Hirao M."/>
            <person name="Ohmori Y."/>
            <person name="Kawabata A."/>
            <person name="Hikiji T."/>
            <person name="Kobatake N."/>
            <person name="Inagaki H."/>
            <person name="Ikema Y."/>
            <person name="Okamoto S."/>
            <person name="Okitani R."/>
            <person name="Kawakami T."/>
            <person name="Noguchi S."/>
            <person name="Itoh T."/>
            <person name="Shigeta K."/>
            <person name="Senba T."/>
            <person name="Matsumura K."/>
            <person name="Nakajima Y."/>
            <person name="Mizuno T."/>
            <person name="Morinaga M."/>
            <person name="Sasaki M."/>
            <person name="Togashi T."/>
            <person name="Oyama M."/>
            <person name="Hata H."/>
            <person name="Watanabe M."/>
            <person name="Komatsu T."/>
            <person name="Mizushima-Sugano J."/>
            <person name="Satoh T."/>
            <person name="Shirai Y."/>
            <person name="Takahashi Y."/>
            <person name="Nakagawa K."/>
            <person name="Okumura K."/>
            <person name="Nagase T."/>
            <person name="Nomura N."/>
            <person name="Kikuchi H."/>
            <person name="Masuho Y."/>
            <person name="Yamashita R."/>
            <person name="Nakai K."/>
            <person name="Yada T."/>
            <person name="Nakamura Y."/>
            <person name="Ohara O."/>
            <person name="Isogai T."/>
            <person name="Sugano S."/>
        </authorList>
    </citation>
    <scope>NUCLEOTIDE SEQUENCE [LARGE SCALE MRNA] (ISOFORMS 1 AND 2)</scope>
    <source>
        <tissue>Tongue</tissue>
    </source>
</reference>
<reference key="4">
    <citation type="submission" date="2003-12" db="EMBL/GenBank/DDBJ databases">
        <authorList>
            <consortium name="SeattleSNPs variation discovery resource"/>
        </authorList>
    </citation>
    <scope>NUCLEOTIDE SEQUENCE [GENOMIC DNA]</scope>
    <scope>VARIANTS HIS-90; LYS-103 AND GLN-205</scope>
</reference>
<reference key="5">
    <citation type="journal article" date="2006" name="Nature">
        <title>DNA sequence of human chromosome 17 and analysis of rearrangement in the human lineage.</title>
        <authorList>
            <person name="Zody M.C."/>
            <person name="Garber M."/>
            <person name="Adams D.J."/>
            <person name="Sharpe T."/>
            <person name="Harrow J."/>
            <person name="Lupski J.R."/>
            <person name="Nicholson C."/>
            <person name="Searle S.M."/>
            <person name="Wilming L."/>
            <person name="Young S.K."/>
            <person name="Abouelleil A."/>
            <person name="Allen N.R."/>
            <person name="Bi W."/>
            <person name="Bloom T."/>
            <person name="Borowsky M.L."/>
            <person name="Bugalter B.E."/>
            <person name="Butler J."/>
            <person name="Chang J.L."/>
            <person name="Chen C.-K."/>
            <person name="Cook A."/>
            <person name="Corum B."/>
            <person name="Cuomo C.A."/>
            <person name="de Jong P.J."/>
            <person name="DeCaprio D."/>
            <person name="Dewar K."/>
            <person name="FitzGerald M."/>
            <person name="Gilbert J."/>
            <person name="Gibson R."/>
            <person name="Gnerre S."/>
            <person name="Goldstein S."/>
            <person name="Grafham D.V."/>
            <person name="Grocock R."/>
            <person name="Hafez N."/>
            <person name="Hagopian D.S."/>
            <person name="Hart E."/>
            <person name="Norman C.H."/>
            <person name="Humphray S."/>
            <person name="Jaffe D.B."/>
            <person name="Jones M."/>
            <person name="Kamal M."/>
            <person name="Khodiyar V.K."/>
            <person name="LaButti K."/>
            <person name="Laird G."/>
            <person name="Lehoczky J."/>
            <person name="Liu X."/>
            <person name="Lokyitsang T."/>
            <person name="Loveland J."/>
            <person name="Lui A."/>
            <person name="Macdonald P."/>
            <person name="Major J.E."/>
            <person name="Matthews L."/>
            <person name="Mauceli E."/>
            <person name="McCarroll S.A."/>
            <person name="Mihalev A.H."/>
            <person name="Mudge J."/>
            <person name="Nguyen C."/>
            <person name="Nicol R."/>
            <person name="O'Leary S.B."/>
            <person name="Osoegawa K."/>
            <person name="Schwartz D.C."/>
            <person name="Shaw-Smith C."/>
            <person name="Stankiewicz P."/>
            <person name="Steward C."/>
            <person name="Swarbreck D."/>
            <person name="Venkataraman V."/>
            <person name="Whittaker C.A."/>
            <person name="Yang X."/>
            <person name="Zimmer A.R."/>
            <person name="Bradley A."/>
            <person name="Hubbard T."/>
            <person name="Birren B.W."/>
            <person name="Rogers J."/>
            <person name="Lander E.S."/>
            <person name="Nusbaum C."/>
        </authorList>
    </citation>
    <scope>NUCLEOTIDE SEQUENCE [LARGE SCALE GENOMIC DNA]</scope>
</reference>
<reference key="6">
    <citation type="journal article" date="2004" name="Genome Res.">
        <title>The status, quality, and expansion of the NIH full-length cDNA project: the Mammalian Gene Collection (MGC).</title>
        <authorList>
            <consortium name="The MGC Project Team"/>
        </authorList>
    </citation>
    <scope>NUCLEOTIDE SEQUENCE [LARGE SCALE MRNA] (ISOFORM 1)</scope>
    <scope>VARIANT PRO-461</scope>
    <source>
        <tissue>Brain</tissue>
        <tissue>Lung</tissue>
    </source>
</reference>
<reference key="7">
    <citation type="journal article" date="1998" name="Mol. Biol. Rep.">
        <title>Human 15-lipoxygenase gene promoter: analysis and identification of DNA binding sites for IL-13-induced regulatory factors in monocytes.</title>
        <authorList>
            <person name="Kelavkar U."/>
            <person name="Wang S."/>
            <person name="Montero A."/>
            <person name="Murtagh J."/>
            <person name="Shah K."/>
            <person name="Badr K."/>
        </authorList>
    </citation>
    <scope>NUCLEOTIDE SEQUENCE [GENOMIC DNA] OF 1-46</scope>
</reference>
<reference key="8">
    <citation type="journal article" date="1988" name="J. Biol. Chem.">
        <title>Arachidonate 15-lipoxygenase (omega-6 lipoxygenase) from human leukocytes. Purification and structural homology to other mammalian lipoxygenases.</title>
        <authorList>
            <person name="Sigal E."/>
            <person name="Grunberger D."/>
            <person name="Craik C.S."/>
            <person name="Caughey G.H."/>
            <person name="Nadel J.A."/>
        </authorList>
    </citation>
    <scope>PROTEIN SEQUENCE OF 2-16</scope>
</reference>
<reference key="9">
    <citation type="journal article" date="1991" name="Eur. J. Biochem.">
        <title>Purification of two forms of arachidonate 15-lipoxygenase from human leukocytes.</title>
        <authorList>
            <person name="Izumi T."/>
            <person name="Raadmark O."/>
            <person name="Joernvall H."/>
            <person name="Samuelsson B."/>
        </authorList>
    </citation>
    <scope>PROTEIN SEQUENCE OF 2-31; 38-45; 157-168 AND 626-631</scope>
    <source>
        <tissue>Eosinophil</tissue>
        <tissue>Leukocyte</tissue>
    </source>
</reference>
<reference key="10">
    <citation type="journal article" date="1991" name="Nature">
        <title>A primary determinant for lipoxygenase positional specificity.</title>
        <authorList>
            <person name="Sloane D.L."/>
            <person name="Leung R."/>
            <person name="Craik C.S."/>
            <person name="Sigal E."/>
        </authorList>
    </citation>
    <scope>CATALYTIC ACTIVITY</scope>
    <scope>FUNCTION</scope>
    <scope>MUTAGENESIS OF MET-418</scope>
</reference>
<reference key="11">
    <citation type="journal article" date="1993" name="Biochim. Biophys. Acta">
        <title>Overexpression, purification and characterization of human recombinant 15-lipoxygenase.</title>
        <authorList>
            <person name="Kuehn H."/>
            <person name="Barnett J."/>
            <person name="Grunberger D."/>
            <person name="Baecker P."/>
            <person name="Chow J."/>
            <person name="Nguyen B."/>
            <person name="Bursztyn-Pettegrew H."/>
            <person name="Chan H."/>
            <person name="Sigal E."/>
        </authorList>
    </citation>
    <scope>CATALYTIC ACTIVITY</scope>
    <scope>FUNCTION</scope>
    <scope>BIOPHYSICOCHEMICAL PROPERTIES</scope>
    <scope>ACTIVITY REGULATION</scope>
</reference>
<reference key="12">
    <citation type="journal article" date="1998" name="Blood">
        <title>Membrane translocation of 15-lipoxygenase in hematopoietic cells is calcium-dependent and activates the oxygenase activity of the enzyme.</title>
        <authorList>
            <person name="Brinckmann R."/>
            <person name="Schnurr K."/>
            <person name="Heydeck D."/>
            <person name="Rosenbach T."/>
            <person name="Kolde G."/>
            <person name="Kuehn H."/>
        </authorList>
    </citation>
    <scope>SUBCELLULAR LOCATION</scope>
    <scope>TISSUE SPECIFICITY</scope>
</reference>
<reference key="13">
    <citation type="journal article" date="2001" name="Prostaglandins Leukot. Essent. Fatty Acids">
        <title>Evaluation of the activity and localization of 15-lipoxygenase-1 after introduction into human colorectal carcinoma Caco-2 cells.</title>
        <authorList>
            <person name="Hsi L.C."/>
            <person name="Kamitani H."/>
            <person name="Cornicelli J.A."/>
            <person name="Eling T.E."/>
        </authorList>
    </citation>
    <scope>SUBCELLULAR LOCATION</scope>
</reference>
<reference key="14">
    <citation type="journal article" date="2006" name="Biochim. Biophys. Acta">
        <title>Interaction of human 15-lipoxygenase-1 with phosphatidylinositol bisphosphates results in increased enzyme activity.</title>
        <authorList>
            <person name="Andersson E."/>
            <person name="Schain F."/>
            <person name="Svedling M."/>
            <person name="Claesson H.E."/>
            <person name="Forsell P.K."/>
        </authorList>
    </citation>
    <scope>LIPID-BINDING</scope>
    <scope>SUBCELLULAR LOCATION</scope>
    <scope>CATALYTIC ACTIVITY</scope>
    <scope>FUNCTION</scope>
    <scope>ACTIVITY REGULATION</scope>
</reference>
<reference key="15">
    <citation type="journal article" date="2008" name="FEBS Lett.">
        <title>Reciprocal regulation of 12- and 15-lipoxygenases by UV-irradiation in human keratinocytes.</title>
        <authorList>
            <person name="Yoo H."/>
            <person name="Jeon B."/>
            <person name="Jeon M.S."/>
            <person name="Lee H."/>
            <person name="Kim T.Y."/>
        </authorList>
    </citation>
    <scope>INDUCTION BY UV</scope>
</reference>
<reference key="16">
    <citation type="journal article" date="2009" name="J. Lipid Res.">
        <title>15(S)-Lipoxygenase-1 associates with neutral lipid droplets in macrophage foam cells: evidence of lipid droplet metabolism.</title>
        <authorList>
            <person name="Weibel G.L."/>
            <person name="Joshi M.R."/>
            <person name="Wei C."/>
            <person name="Bates S.R."/>
            <person name="Blair I.A."/>
            <person name="Rothblat G.H."/>
        </authorList>
    </citation>
    <scope>SUBCELLULAR LOCATION</scope>
</reference>
<reference key="17">
    <citation type="journal article" date="2011" name="Proc. Natl. Acad. Sci. U.S.A.">
        <title>15-Lipoxygenase 1 interacts with phosphatidylethanolamine-binding protein to regulate MAPK signaling in human airway epithelial cells.</title>
        <authorList>
            <person name="Zhao J."/>
            <person name="O'Donnell V.B."/>
            <person name="Balzar S."/>
            <person name="St Croix C.M."/>
            <person name="Trudeau J.B."/>
            <person name="Wenzel S.E."/>
        </authorList>
    </citation>
    <scope>FUNCTION IN IL13 SIGNALING</scope>
    <scope>INTERACTION WITH PEBP1</scope>
    <scope>SUBCELLULAR LOCATION</scope>
    <scope>TISSUE SPECIFICITY</scope>
</reference>
<reference key="18">
    <citation type="journal article" date="2013" name="J. Lipid Res.">
        <title>Biosynthesis, isolation, and NMR analysis of leukotriene A epoxides: substrate chirality as a determinant of the cis or trans epoxide configuration.</title>
        <authorList>
            <person name="Jin J."/>
            <person name="Zheng Y."/>
            <person name="Boeglin W.E."/>
            <person name="Brash A.R."/>
        </authorList>
    </citation>
    <scope>CATALYTIC ACTIVITY</scope>
    <scope>FUNCTION</scope>
</reference>
<reference key="19">
    <citation type="journal article" date="2013" name="Redox Biol.">
        <title>Functional characterization of genetic enzyme variations in human lipoxygenases.</title>
        <authorList>
            <person name="Horn T."/>
            <person name="Reddy Kakularam K."/>
            <person name="Anton M."/>
            <person name="Richter C."/>
            <person name="Reddanna P."/>
            <person name="Kuhn H."/>
        </authorList>
    </citation>
    <scope>CATALYTIC ACTIVITY</scope>
    <scope>FUNCTION</scope>
    <scope>BIOPHYSICOCHEMICAL PROPERTIES</scope>
    <scope>VARIANTS GLN-205; TRP-402; ARG-422; GLU-422; MET-560 AND SER-617</scope>
    <scope>CHARACTERIZATION OF VARIANTS GLN-205; TRP-402; ARG-422; GLU-422; MET-560 AND SER-617</scope>
</reference>
<reference key="20">
    <citation type="journal article" date="2014" name="J. Lipid Res.">
        <title>Lipoxygenase-catalyzed transformation of epoxy fatty acids to hydroxy-endoperoxides: a potential P450 and lipoxygenase interaction.</title>
        <authorList>
            <person name="Teder T."/>
            <person name="Boeglin W.E."/>
            <person name="Brash A.R."/>
        </authorList>
    </citation>
    <scope>CATALYTIC ACTIVITY</scope>
    <scope>FUNCTION</scope>
</reference>
<reference key="21">
    <citation type="journal article" date="2020" name="J. Lipid Res.">
        <title>15-Lipoxygenase-1 biosynthesis of 7S,14S-diHDHA implicates 15-lipoxygenase-2 in biosynthesis of resolvin D5.</title>
        <authorList>
            <person name="Perry S.C."/>
            <person name="Kalyanaraman C."/>
            <person name="Tourdot B.E."/>
            <person name="Conrad W.S."/>
            <person name="Akinkugbe O."/>
            <person name="Freedman J.C."/>
            <person name="Holinstat M."/>
            <person name="Jacobson M.P."/>
            <person name="Holman T.R."/>
        </authorList>
    </citation>
    <scope>FUNCTION</scope>
    <scope>CATALYTIC ACTIVITY</scope>
</reference>
<reference key="22">
    <citation type="journal article" date="2008" name="Atherosclerosis">
        <title>A near null variant of 12/15-LOX encoded by a novel SNP in ALOX15 and the risk of coronary artery disease.</title>
        <authorList>
            <person name="Assimes T.L."/>
            <person name="Knowles J.W."/>
            <person name="Priest J.R."/>
            <person name="Basu A."/>
            <person name="Borchert A."/>
            <person name="Volcik K.A."/>
            <person name="Grove M.L."/>
            <person name="Tabor H.K."/>
            <person name="Southwick A."/>
            <person name="Tabibiazar R."/>
            <person name="Sidney S."/>
            <person name="Boerwinkle E."/>
            <person name="Go A.S."/>
            <person name="Iribarren C."/>
            <person name="Hlatky M.A."/>
            <person name="Fortmann S.P."/>
            <person name="Myers R.M."/>
            <person name="Kuhn H."/>
            <person name="Risch N."/>
            <person name="Quertermous T."/>
        </authorList>
    </citation>
    <scope>VARIANT MET-560</scope>
    <scope>CHARACTERIZATION OF VARIANT MET-560</scope>
    <scope>INVOLVEMENT IN CORONARY ARTERY DISEASE</scope>
</reference>
<feature type="initiator methionine" description="Removed" evidence="9 20">
    <location>
        <position position="1"/>
    </location>
</feature>
<feature type="chain" id="PRO_0000220697" description="Polyunsaturated fatty acid lipoxygenase ALOX15">
    <location>
        <begin position="2"/>
        <end position="662"/>
    </location>
</feature>
<feature type="domain" description="PLAT" evidence="6">
    <location>
        <begin position="2"/>
        <end position="114"/>
    </location>
</feature>
<feature type="domain" description="Lipoxygenase" evidence="7">
    <location>
        <begin position="115"/>
        <end position="662"/>
    </location>
</feature>
<feature type="binding site" evidence="7">
    <location>
        <position position="360"/>
    </location>
    <ligand>
        <name>Fe cation</name>
        <dbReference type="ChEBI" id="CHEBI:24875"/>
        <note>catalytic</note>
    </ligand>
</feature>
<feature type="binding site" evidence="7">
    <location>
        <position position="365"/>
    </location>
    <ligand>
        <name>Fe cation</name>
        <dbReference type="ChEBI" id="CHEBI:24875"/>
        <note>catalytic</note>
    </ligand>
</feature>
<feature type="binding site" evidence="7">
    <location>
        <position position="540"/>
    </location>
    <ligand>
        <name>Fe cation</name>
        <dbReference type="ChEBI" id="CHEBI:24875"/>
        <note>catalytic</note>
    </ligand>
</feature>
<feature type="binding site" evidence="7">
    <location>
        <position position="544"/>
    </location>
    <ligand>
        <name>Fe cation</name>
        <dbReference type="ChEBI" id="CHEBI:24875"/>
        <note>catalytic</note>
    </ligand>
</feature>
<feature type="binding site" evidence="7">
    <location>
        <position position="662"/>
    </location>
    <ligand>
        <name>Fe cation</name>
        <dbReference type="ChEBI" id="CHEBI:24875"/>
        <note>catalytic</note>
    </ligand>
</feature>
<feature type="splice variant" id="VSP_056681" description="In isoform 2." evidence="24">
    <location>
        <begin position="46"/>
        <end position="84"/>
    </location>
</feature>
<feature type="sequence variant" id="VAR_018746" description="In dbSNP:rs11568142." evidence="23">
    <original>D</original>
    <variation>H</variation>
    <location>
        <position position="90"/>
    </location>
</feature>
<feature type="sequence variant" id="VAR_035036" description="In dbSNP:rs41439950.">
    <original>G</original>
    <variation>V</variation>
    <location>
        <position position="102"/>
    </location>
</feature>
<feature type="sequence variant" id="VAR_018747" description="In dbSNP:rs11568099." evidence="23">
    <original>N</original>
    <variation>K</variation>
    <location>
        <position position="103"/>
    </location>
</feature>
<feature type="sequence variant" id="VAR_018748" description="Does not affect arachidonate 15-lipoxygenase activity. Does not affect protein affinity for (9Z,12Z)-octadecadienoate.; dbSNP:rs11568101." evidence="17 23">
    <original>R</original>
    <variation>Q</variation>
    <location>
        <position position="205"/>
    </location>
</feature>
<feature type="sequence variant" id="VAR_035037" description="In dbSNP:rs3892408.">
    <original>V</original>
    <variation>M</variation>
    <location>
        <position position="239"/>
    </location>
</feature>
<feature type="sequence variant" id="VAR_083449" description="36% of arachidonate 15-lipoxygenase activity." evidence="17">
    <original>R</original>
    <variation>W</variation>
    <location>
        <position position="402"/>
    </location>
</feature>
<feature type="sequence variant" id="VAR_083450" description="Loss of arachidonate 15-lipoxygenase activity." evidence="17">
    <original>G</original>
    <variation>E</variation>
    <location>
        <position position="422"/>
    </location>
</feature>
<feature type="sequence variant" id="VAR_083451" description="46% of arachidonate 15-lipoxygenase activity. Does not affect protein affinity for (9Z,12Z)-octadecadienoate." evidence="17">
    <original>G</original>
    <variation>R</variation>
    <location>
        <position position="422"/>
    </location>
</feature>
<feature type="sequence variant" id="VAR_035038" description="In dbSNP:rs17852628." evidence="8">
    <original>A</original>
    <variation>P</variation>
    <location>
        <position position="461"/>
    </location>
</feature>
<feature type="sequence variant" id="VAR_035039" description="Loss of catalytic activity; Loss of arachidonate 15-lipoxygenase activity.; dbSNP:rs34210653." evidence="11 17">
    <original>T</original>
    <variation>M</variation>
    <location>
        <position position="560"/>
    </location>
</feature>
<feature type="sequence variant" id="VAR_083452" description="Does not affect arachidonate 15-lipoxygenase activity. Does not affect protein affinity for (9Z,12Z)-octadecadienoate." evidence="17">
    <original>P</original>
    <variation>S</variation>
    <location>
        <position position="617"/>
    </location>
</feature>
<feature type="mutagenesis site" description="Catalyzes 15- and 12-lipoxygenation." evidence="13">
    <original>M</original>
    <variation>V</variation>
    <location>
        <position position="418"/>
    </location>
</feature>
<feature type="sequence conflict" description="In Ref. 7; AAC52118." evidence="26" ref="7">
    <original>E</original>
    <variation>V</variation>
    <location>
        <position position="46"/>
    </location>
</feature>
<protein>
    <recommendedName>
        <fullName evidence="26">Polyunsaturated fatty acid lipoxygenase ALOX15</fullName>
    </recommendedName>
    <alternativeName>
        <fullName evidence="4">12/15-lipoxygenase</fullName>
    </alternativeName>
    <alternativeName>
        <fullName evidence="5">Arachidonate 12-lipoxygenase, leukocyte-type</fullName>
        <shortName>12-LOX</shortName>
        <ecNumber evidence="13">1.13.11.31</ecNumber>
    </alternativeName>
    <alternativeName>
        <fullName>Arachidonate 15-lipoxygenase</fullName>
        <shortName>15-LOX</shortName>
        <shortName>15-LOX-1</shortName>
        <ecNumber evidence="10 13 17 21">1.13.11.33</ecNumber>
    </alternativeName>
    <alternativeName>
        <fullName evidence="25">Arachidonate omega-6 lipoxygenase</fullName>
    </alternativeName>
    <alternativeName>
        <fullName evidence="5">Hepoxilin A3 synthase Alox15</fullName>
        <ecNumber evidence="5">1.13.11.-</ecNumber>
    </alternativeName>
    <alternativeName>
        <fullName>Linoleate 13S-lipoxygenase</fullName>
        <ecNumber evidence="21">1.13.11.12</ecNumber>
    </alternativeName>
</protein>